<evidence type="ECO:0000255" key="1">
    <source>
        <dbReference type="HAMAP-Rule" id="MF_00346"/>
    </source>
</evidence>
<comment type="similarity">
    <text evidence="1">Belongs to the UPF0149 family.</text>
</comment>
<name>Y904_XANC8</name>
<accession>Q4UY95</accession>
<feature type="chain" id="PRO_1000013052" description="UPF0149 protein XC_0904">
    <location>
        <begin position="1"/>
        <end position="180"/>
    </location>
</feature>
<gene>
    <name type="ordered locus">XC_0904</name>
</gene>
<protein>
    <recommendedName>
        <fullName evidence="1">UPF0149 protein XC_0904</fullName>
    </recommendedName>
</protein>
<dbReference type="EMBL" id="CP000050">
    <property type="protein sequence ID" value="AAY47978.1"/>
    <property type="molecule type" value="Genomic_DNA"/>
</dbReference>
<dbReference type="RefSeq" id="WP_011038362.1">
    <property type="nucleotide sequence ID" value="NZ_CP155948.1"/>
</dbReference>
<dbReference type="SMR" id="Q4UY95"/>
<dbReference type="KEGG" id="xcb:XC_0904"/>
<dbReference type="HOGENOM" id="CLU_085336_0_0_6"/>
<dbReference type="Proteomes" id="UP000000420">
    <property type="component" value="Chromosome"/>
</dbReference>
<dbReference type="GO" id="GO:0005829">
    <property type="term" value="C:cytosol"/>
    <property type="evidence" value="ECO:0007669"/>
    <property type="project" value="TreeGrafter"/>
</dbReference>
<dbReference type="Gene3D" id="1.20.120.740">
    <property type="entry name" value="YgfB uncharacterised protein family UPF0149, PF03695"/>
    <property type="match status" value="1"/>
</dbReference>
<dbReference type="HAMAP" id="MF_00346">
    <property type="entry name" value="UPF0149"/>
    <property type="match status" value="1"/>
</dbReference>
<dbReference type="InterPro" id="IPR011978">
    <property type="entry name" value="YgfB-like"/>
</dbReference>
<dbReference type="InterPro" id="IPR036255">
    <property type="entry name" value="YgfB-like_sf"/>
</dbReference>
<dbReference type="NCBIfam" id="NF003405">
    <property type="entry name" value="PRK04758.1"/>
    <property type="match status" value="1"/>
</dbReference>
<dbReference type="PANTHER" id="PTHR37528">
    <property type="entry name" value="UPF0149 PROTEIN YGFB"/>
    <property type="match status" value="1"/>
</dbReference>
<dbReference type="PANTHER" id="PTHR37528:SF1">
    <property type="entry name" value="UPF0149 PROTEIN YGFB"/>
    <property type="match status" value="1"/>
</dbReference>
<dbReference type="Pfam" id="PF03695">
    <property type="entry name" value="UPF0149"/>
    <property type="match status" value="1"/>
</dbReference>
<dbReference type="SUPFAM" id="SSF101327">
    <property type="entry name" value="YgfB-like"/>
    <property type="match status" value="1"/>
</dbReference>
<reference key="1">
    <citation type="journal article" date="2005" name="Genome Res.">
        <title>Comparative and functional genomic analyses of the pathogenicity of phytopathogen Xanthomonas campestris pv. campestris.</title>
        <authorList>
            <person name="Qian W."/>
            <person name="Jia Y."/>
            <person name="Ren S.-X."/>
            <person name="He Y.-Q."/>
            <person name="Feng J.-X."/>
            <person name="Lu L.-F."/>
            <person name="Sun Q."/>
            <person name="Ying G."/>
            <person name="Tang D.-J."/>
            <person name="Tang H."/>
            <person name="Wu W."/>
            <person name="Hao P."/>
            <person name="Wang L."/>
            <person name="Jiang B.-L."/>
            <person name="Zeng S."/>
            <person name="Gu W.-Y."/>
            <person name="Lu G."/>
            <person name="Rong L."/>
            <person name="Tian Y."/>
            <person name="Yao Z."/>
            <person name="Fu G."/>
            <person name="Chen B."/>
            <person name="Fang R."/>
            <person name="Qiang B."/>
            <person name="Chen Z."/>
            <person name="Zhao G.-P."/>
            <person name="Tang J.-L."/>
            <person name="He C."/>
        </authorList>
    </citation>
    <scope>NUCLEOTIDE SEQUENCE [LARGE SCALE GENOMIC DNA]</scope>
    <source>
        <strain>8004</strain>
    </source>
</reference>
<organism>
    <name type="scientific">Xanthomonas campestris pv. campestris (strain 8004)</name>
    <dbReference type="NCBI Taxonomy" id="314565"/>
    <lineage>
        <taxon>Bacteria</taxon>
        <taxon>Pseudomonadati</taxon>
        <taxon>Pseudomonadota</taxon>
        <taxon>Gammaproteobacteria</taxon>
        <taxon>Lysobacterales</taxon>
        <taxon>Lysobacteraceae</taxon>
        <taxon>Xanthomonas</taxon>
    </lineage>
</organism>
<sequence>MDLPDVAAVQHESRQLDLASSAAELHGGLCGWLSGGGADSADWLARILADTAQVAPAQGGALDQMRQATVAQLEDRDFAFELLLTEDGAPLPARTDALFDWCRAFLGGFGLAAQQRPALSEEGEEALQDLARLAQASSDDFDTAEEDDTALAEIEEFVRVAVLLLHGDCVMGPRFRQRLN</sequence>
<proteinExistence type="inferred from homology"/>